<dbReference type="EMBL" id="L23341">
    <property type="protein sequence ID" value="AAC37687.1"/>
    <property type="molecule type" value="Genomic_DNA"/>
</dbReference>
<dbReference type="SMR" id="Q7GI23"/>
<dbReference type="GO" id="GO:0005743">
    <property type="term" value="C:mitochondrial inner membrane"/>
    <property type="evidence" value="ECO:0007669"/>
    <property type="project" value="UniProtKB-SubCell"/>
</dbReference>
<dbReference type="GO" id="GO:0045275">
    <property type="term" value="C:respiratory chain complex III"/>
    <property type="evidence" value="ECO:0007669"/>
    <property type="project" value="InterPro"/>
</dbReference>
<dbReference type="GO" id="GO:0046872">
    <property type="term" value="F:metal ion binding"/>
    <property type="evidence" value="ECO:0007669"/>
    <property type="project" value="UniProtKB-KW"/>
</dbReference>
<dbReference type="GO" id="GO:0008121">
    <property type="term" value="F:ubiquinol-cytochrome-c reductase activity"/>
    <property type="evidence" value="ECO:0007669"/>
    <property type="project" value="InterPro"/>
</dbReference>
<dbReference type="GO" id="GO:0006122">
    <property type="term" value="P:mitochondrial electron transport, ubiquinol to cytochrome c"/>
    <property type="evidence" value="ECO:0007669"/>
    <property type="project" value="TreeGrafter"/>
</dbReference>
<dbReference type="CDD" id="cd00290">
    <property type="entry name" value="cytochrome_b_C"/>
    <property type="match status" value="1"/>
</dbReference>
<dbReference type="CDD" id="cd00284">
    <property type="entry name" value="Cytochrome_b_N"/>
    <property type="match status" value="1"/>
</dbReference>
<dbReference type="FunFam" id="1.20.810.10:FF:000002">
    <property type="entry name" value="Cytochrome b"/>
    <property type="match status" value="1"/>
</dbReference>
<dbReference type="Gene3D" id="1.20.810.10">
    <property type="entry name" value="Cytochrome Bc1 Complex, Chain C"/>
    <property type="match status" value="1"/>
</dbReference>
<dbReference type="InterPro" id="IPR005798">
    <property type="entry name" value="Cyt_b/b6_C"/>
</dbReference>
<dbReference type="InterPro" id="IPR036150">
    <property type="entry name" value="Cyt_b/b6_C_sf"/>
</dbReference>
<dbReference type="InterPro" id="IPR005797">
    <property type="entry name" value="Cyt_b/b6_N"/>
</dbReference>
<dbReference type="InterPro" id="IPR027387">
    <property type="entry name" value="Cytb/b6-like_sf"/>
</dbReference>
<dbReference type="InterPro" id="IPR030689">
    <property type="entry name" value="Cytochrome_b"/>
</dbReference>
<dbReference type="InterPro" id="IPR048260">
    <property type="entry name" value="Cytochrome_b_C_euk/bac"/>
</dbReference>
<dbReference type="InterPro" id="IPR048259">
    <property type="entry name" value="Cytochrome_b_N_euk/bac"/>
</dbReference>
<dbReference type="InterPro" id="IPR016174">
    <property type="entry name" value="Di-haem_cyt_TM"/>
</dbReference>
<dbReference type="PANTHER" id="PTHR19271">
    <property type="entry name" value="CYTOCHROME B"/>
    <property type="match status" value="1"/>
</dbReference>
<dbReference type="PANTHER" id="PTHR19271:SF16">
    <property type="entry name" value="CYTOCHROME B"/>
    <property type="match status" value="1"/>
</dbReference>
<dbReference type="Pfam" id="PF00032">
    <property type="entry name" value="Cytochrom_B_C"/>
    <property type="match status" value="1"/>
</dbReference>
<dbReference type="Pfam" id="PF00033">
    <property type="entry name" value="Cytochrome_B"/>
    <property type="match status" value="1"/>
</dbReference>
<dbReference type="PIRSF" id="PIRSF038885">
    <property type="entry name" value="COB"/>
    <property type="match status" value="1"/>
</dbReference>
<dbReference type="SUPFAM" id="SSF81648">
    <property type="entry name" value="a domain/subunit of cytochrome bc1 complex (Ubiquinol-cytochrome c reductase)"/>
    <property type="match status" value="1"/>
</dbReference>
<dbReference type="SUPFAM" id="SSF81342">
    <property type="entry name" value="Transmembrane di-heme cytochromes"/>
    <property type="match status" value="1"/>
</dbReference>
<dbReference type="PROSITE" id="PS51003">
    <property type="entry name" value="CYTB_CTER"/>
    <property type="match status" value="1"/>
</dbReference>
<dbReference type="PROSITE" id="PS51002">
    <property type="entry name" value="CYTB_NTER"/>
    <property type="match status" value="1"/>
</dbReference>
<comment type="function">
    <text evidence="2">Component of the ubiquinol-cytochrome c reductase complex (complex III or cytochrome b-c1 complex) that is part of the mitochondrial respiratory chain. The b-c1 complex mediates electron transfer from ubiquinol to cytochrome c. Contributes to the generation of a proton gradient across the mitochondrial membrane that is then used for ATP synthesis.</text>
</comment>
<comment type="cofactor">
    <cofactor evidence="2">
        <name>heme b</name>
        <dbReference type="ChEBI" id="CHEBI:60344"/>
    </cofactor>
    <text evidence="2">Binds 2 heme b groups non-covalently.</text>
</comment>
<comment type="subunit">
    <text evidence="2">The cytochrome bc1 complex contains 11 subunits: 3 respiratory subunits (MT-CYB, CYC1 and UQCRFS1), 2 core proteins (UQCRC1 and UQCRC2) and 6 low-molecular weight proteins (UQCRH/QCR6, UQCRB/QCR7, UQCRQ/QCR8, UQCR10/QCR9, UQCR11/QCR10 and a cleavage product of UQCRFS1). This cytochrome bc1 complex then forms a dimer.</text>
</comment>
<comment type="subcellular location">
    <subcellularLocation>
        <location evidence="2">Mitochondrion inner membrane</location>
        <topology evidence="2">Multi-pass membrane protein</topology>
    </subcellularLocation>
</comment>
<comment type="miscellaneous">
    <text evidence="1">Heme 1 (or BL or b562) is low-potential and absorbs at about 562 nm, and heme 2 (or BH or b566) is high-potential and absorbs at about 566 nm.</text>
</comment>
<comment type="similarity">
    <text evidence="3 4">Belongs to the cytochrome b family.</text>
</comment>
<comment type="caution">
    <text evidence="2">The full-length protein contains only eight transmembrane helices, not nine as predicted by bioinformatics tools.</text>
</comment>
<evidence type="ECO:0000250" key="1"/>
<evidence type="ECO:0000250" key="2">
    <source>
        <dbReference type="UniProtKB" id="P00157"/>
    </source>
</evidence>
<evidence type="ECO:0000255" key="3">
    <source>
        <dbReference type="PROSITE-ProRule" id="PRU00967"/>
    </source>
</evidence>
<evidence type="ECO:0000255" key="4">
    <source>
        <dbReference type="PROSITE-ProRule" id="PRU00968"/>
    </source>
</evidence>
<name>CYB_ECHCH</name>
<organism>
    <name type="scientific">Echimys chrysurus</name>
    <name type="common">White-faced spiny tree rat</name>
    <dbReference type="NCBI Taxonomy" id="30621"/>
    <lineage>
        <taxon>Eukaryota</taxon>
        <taxon>Metazoa</taxon>
        <taxon>Chordata</taxon>
        <taxon>Craniata</taxon>
        <taxon>Vertebrata</taxon>
        <taxon>Euteleostomi</taxon>
        <taxon>Mammalia</taxon>
        <taxon>Eutheria</taxon>
        <taxon>Euarchontoglires</taxon>
        <taxon>Glires</taxon>
        <taxon>Rodentia</taxon>
        <taxon>Hystricomorpha</taxon>
        <taxon>Echimyidae</taxon>
        <taxon>Echimys</taxon>
    </lineage>
</organism>
<feature type="chain" id="PRO_0000255048" description="Cytochrome b">
    <location>
        <begin position="1"/>
        <end position="379"/>
    </location>
</feature>
<feature type="transmembrane region" description="Helical" evidence="2">
    <location>
        <begin position="33"/>
        <end position="53"/>
    </location>
</feature>
<feature type="transmembrane region" description="Helical" evidence="2">
    <location>
        <begin position="77"/>
        <end position="98"/>
    </location>
</feature>
<feature type="transmembrane region" description="Helical" evidence="2">
    <location>
        <begin position="113"/>
        <end position="133"/>
    </location>
</feature>
<feature type="transmembrane region" description="Helical" evidence="2">
    <location>
        <begin position="178"/>
        <end position="198"/>
    </location>
</feature>
<feature type="transmembrane region" description="Helical" evidence="2">
    <location>
        <begin position="226"/>
        <end position="246"/>
    </location>
</feature>
<feature type="transmembrane region" description="Helical" evidence="2">
    <location>
        <begin position="288"/>
        <end position="308"/>
    </location>
</feature>
<feature type="transmembrane region" description="Helical" evidence="2">
    <location>
        <begin position="320"/>
        <end position="340"/>
    </location>
</feature>
<feature type="transmembrane region" description="Helical" evidence="2">
    <location>
        <begin position="347"/>
        <end position="367"/>
    </location>
</feature>
<feature type="binding site" description="axial binding residue" evidence="2">
    <location>
        <position position="83"/>
    </location>
    <ligand>
        <name>heme b</name>
        <dbReference type="ChEBI" id="CHEBI:60344"/>
        <label>b562</label>
    </ligand>
    <ligandPart>
        <name>Fe</name>
        <dbReference type="ChEBI" id="CHEBI:18248"/>
    </ligandPart>
</feature>
<feature type="binding site" description="axial binding residue" evidence="2">
    <location>
        <position position="97"/>
    </location>
    <ligand>
        <name>heme b</name>
        <dbReference type="ChEBI" id="CHEBI:60344"/>
        <label>b566</label>
    </ligand>
    <ligandPart>
        <name>Fe</name>
        <dbReference type="ChEBI" id="CHEBI:18248"/>
    </ligandPart>
</feature>
<feature type="binding site" description="axial binding residue" evidence="2">
    <location>
        <position position="182"/>
    </location>
    <ligand>
        <name>heme b</name>
        <dbReference type="ChEBI" id="CHEBI:60344"/>
        <label>b562</label>
    </ligand>
    <ligandPart>
        <name>Fe</name>
        <dbReference type="ChEBI" id="CHEBI:18248"/>
    </ligandPart>
</feature>
<feature type="binding site" description="axial binding residue" evidence="2">
    <location>
        <position position="196"/>
    </location>
    <ligand>
        <name>heme b</name>
        <dbReference type="ChEBI" id="CHEBI:60344"/>
        <label>b566</label>
    </ligand>
    <ligandPart>
        <name>Fe</name>
        <dbReference type="ChEBI" id="CHEBI:18248"/>
    </ligandPart>
</feature>
<feature type="binding site" evidence="2">
    <location>
        <position position="201"/>
    </location>
    <ligand>
        <name>a ubiquinone</name>
        <dbReference type="ChEBI" id="CHEBI:16389"/>
    </ligand>
</feature>
<gene>
    <name type="primary">MT-CYB</name>
    <name type="synonym">COB</name>
    <name type="synonym">CYTB</name>
    <name type="synonym">MTCYB</name>
</gene>
<keyword id="KW-0249">Electron transport</keyword>
<keyword id="KW-0349">Heme</keyword>
<keyword id="KW-0408">Iron</keyword>
<keyword id="KW-0472">Membrane</keyword>
<keyword id="KW-0479">Metal-binding</keyword>
<keyword id="KW-0496">Mitochondrion</keyword>
<keyword id="KW-0999">Mitochondrion inner membrane</keyword>
<keyword id="KW-0679">Respiratory chain</keyword>
<keyword id="KW-0812">Transmembrane</keyword>
<keyword id="KW-1133">Transmembrane helix</keyword>
<keyword id="KW-0813">Transport</keyword>
<keyword id="KW-0830">Ubiquinone</keyword>
<protein>
    <recommendedName>
        <fullName>Cytochrome b</fullName>
    </recommendedName>
    <alternativeName>
        <fullName>Complex III subunit 3</fullName>
    </alternativeName>
    <alternativeName>
        <fullName>Complex III subunit III</fullName>
    </alternativeName>
    <alternativeName>
        <fullName>Cytochrome b-c1 complex subunit 3</fullName>
    </alternativeName>
    <alternativeName>
        <fullName>Ubiquinol-cytochrome-c reductase complex cytochrome b subunit</fullName>
    </alternativeName>
</protein>
<proteinExistence type="inferred from homology"/>
<reference key="1">
    <citation type="journal article" date="1996" name="Mol. Phylogenet. Evol.">
        <title>The simultaneous diversification of South American echimyid rodents (Hystricognathi) based on complete cytochrome b sequences.</title>
        <authorList>
            <person name="Lara M.C."/>
            <person name="Patton J.L."/>
            <person name="da Silva M.N.F."/>
        </authorList>
    </citation>
    <scope>NUCLEOTIDE SEQUENCE [GENOMIC DNA]</scope>
</reference>
<sequence>MTNIRKSHPIIKIINHSFIDLPTPSNISSWWNFGSLLGVCLALQIITGLFLAMHYTADTTTAFSSVTHICRDVNYGWLIRYAHANGASIFFIFLYFHIGRGIYYGSYTFMETWNIGVILLFTVMATAFMGYVLPWGQMSFWGATVITNLLSAIPYIGPTLVEWIWGGFSVDKATLTRFFAFHFVLPFIITAMVMIHLLFLHETGSNNPSGLNSDSDKIPFHPYYTIKDILGLLFMLFALMMLILFSPDLLGDPDNYTPANPLNTPPHIKPEWYFLFAYAILRSIPNKLGGVLALMFSILILMLFPTLHMSKQRSMSFRPLSQCLLWILVANLIILTWIGGQPVEHPFITIGQLASISYFCIILIIMPTISFMENKLLKW</sequence>
<accession>Q7GI23</accession>
<geneLocation type="mitochondrion"/>